<evidence type="ECO:0000305" key="1"/>
<evidence type="ECO:0007829" key="2">
    <source>
        <dbReference type="PDB" id="2X9O"/>
    </source>
</evidence>
<organism>
    <name type="scientific">Synechococcus sp. (strain WH8020)</name>
    <dbReference type="NCBI Taxonomy" id="32052"/>
    <lineage>
        <taxon>Bacteria</taxon>
        <taxon>Bacillati</taxon>
        <taxon>Cyanobacteriota</taxon>
        <taxon>Cyanophyceae</taxon>
        <taxon>Synechococcales</taxon>
        <taxon>Synechococcaceae</taxon>
        <taxon>Synechococcus</taxon>
    </lineage>
</organism>
<sequence>MFDSFLNELHSDITKRGGSPLPLPEGLEECRSSKSSSVIQSWLWDVPGFRRWRVTRLDAGDSLQVFNSVAYPDYNYDHPLMGVDLLWFGARQKLVAVLDFQPLVQDKDYLDRYFSGLKELNQRFPDLNGEETMRSFDPNQYFSSWLLFCRGGAEQADLSLPKAFSAFLKAYWDLHDNAKSIPSTIPPEEVKNLQDKYDIYSAERDPAHGLFTSHFGKDWSNRFLHEFLFPASSSHK</sequence>
<proteinExistence type="evidence at protein level"/>
<protein>
    <recommendedName>
        <fullName>15,16-dihydrobiliverdin:ferredoxin oxidoreductase</fullName>
        <ecNumber>1.3.7.2</ecNumber>
    </recommendedName>
</protein>
<accession>Q02189</accession>
<gene>
    <name type="primary">pebA</name>
</gene>
<feature type="chain" id="PRO_0000216730" description="15,16-dihydrobiliverdin:ferredoxin oxidoreductase">
    <location>
        <begin position="1"/>
        <end position="236"/>
    </location>
</feature>
<feature type="helix" evidence="2">
    <location>
        <begin position="2"/>
        <end position="15"/>
    </location>
</feature>
<feature type="strand" evidence="2">
    <location>
        <begin position="19"/>
        <end position="21"/>
    </location>
</feature>
<feature type="strand" evidence="2">
    <location>
        <begin position="27"/>
        <end position="31"/>
    </location>
</feature>
<feature type="turn" evidence="2">
    <location>
        <begin position="33"/>
        <end position="35"/>
    </location>
</feature>
<feature type="strand" evidence="2">
    <location>
        <begin position="38"/>
        <end position="45"/>
    </location>
</feature>
<feature type="strand" evidence="2">
    <location>
        <begin position="49"/>
        <end position="59"/>
    </location>
</feature>
<feature type="turn" evidence="2">
    <location>
        <begin position="60"/>
        <end position="62"/>
    </location>
</feature>
<feature type="strand" evidence="2">
    <location>
        <begin position="63"/>
        <end position="72"/>
    </location>
</feature>
<feature type="strand" evidence="2">
    <location>
        <begin position="80"/>
        <end position="88"/>
    </location>
</feature>
<feature type="helix" evidence="2">
    <location>
        <begin position="89"/>
        <end position="91"/>
    </location>
</feature>
<feature type="strand" evidence="2">
    <location>
        <begin position="93"/>
        <end position="101"/>
    </location>
</feature>
<feature type="helix" evidence="2">
    <location>
        <begin position="107"/>
        <end position="113"/>
    </location>
</feature>
<feature type="helix" evidence="2">
    <location>
        <begin position="115"/>
        <end position="123"/>
    </location>
</feature>
<feature type="strand" evidence="2">
    <location>
        <begin position="134"/>
        <end position="136"/>
    </location>
</feature>
<feature type="strand" evidence="2">
    <location>
        <begin position="147"/>
        <end position="151"/>
    </location>
</feature>
<feature type="helix" evidence="2">
    <location>
        <begin position="153"/>
        <end position="158"/>
    </location>
</feature>
<feature type="helix" evidence="2">
    <location>
        <begin position="160"/>
        <end position="178"/>
    </location>
</feature>
<feature type="helix" evidence="2">
    <location>
        <begin position="187"/>
        <end position="204"/>
    </location>
</feature>
<feature type="helix" evidence="2">
    <location>
        <begin position="208"/>
        <end position="215"/>
    </location>
</feature>
<feature type="helix" evidence="2">
    <location>
        <begin position="217"/>
        <end position="226"/>
    </location>
</feature>
<name>PEBA_SYNPY</name>
<reference key="1">
    <citation type="journal article" date="1993" name="Plant Mol. Biol.">
        <title>Genes of the R-phycocyanin II locus of marine Synechococcus spp., and comparison of protein-chromophore interactions in phycocyanins differing in bilin composition.</title>
        <authorList>
            <person name="de Lorimier R."/>
            <person name="Wilbanks S.M."/>
            <person name="Glazer A.N."/>
        </authorList>
    </citation>
    <scope>NUCLEOTIDE SEQUENCE [GENOMIC DNA]</scope>
</reference>
<reference key="2">
    <citation type="journal article" date="2001" name="Plant Cell">
        <title>Functional genomic analysis of the HY2 family of ferredoxin-dependent bilin reductases from oxygenic photosynthetic organisms.</title>
        <authorList>
            <person name="Frankenberg N."/>
            <person name="Mukougawa K."/>
            <person name="Kohchi T."/>
            <person name="Lagarias J.C."/>
        </authorList>
    </citation>
    <scope>NUCLEOTIDE SEQUENCE [GENOMIC DNA]</scope>
</reference>
<dbReference type="EC" id="1.3.7.2"/>
<dbReference type="EMBL" id="M95288">
    <property type="protein sequence ID" value="AAA27343.1"/>
    <property type="molecule type" value="Genomic_DNA"/>
</dbReference>
<dbReference type="EMBL" id="AF400984">
    <property type="protein sequence ID" value="AAK77915.1"/>
    <property type="molecule type" value="Genomic_DNA"/>
</dbReference>
<dbReference type="PIR" id="S31058">
    <property type="entry name" value="S31058"/>
</dbReference>
<dbReference type="RefSeq" id="WP_048347955.1">
    <property type="nucleotide sequence ID" value="NZ_CP011941.1"/>
</dbReference>
<dbReference type="PDB" id="2X9O">
    <property type="method" value="X-ray"/>
    <property type="resolution" value="1.55 A"/>
    <property type="chains" value="A=2-236"/>
</dbReference>
<dbReference type="PDBsum" id="2X9O"/>
<dbReference type="SMR" id="Q02189"/>
<dbReference type="STRING" id="32052.WB44_13640"/>
<dbReference type="OrthoDB" id="527390at2"/>
<dbReference type="BioCyc" id="MetaCyc:MONOMER-13950"/>
<dbReference type="BRENDA" id="1.3.7.2">
    <property type="organism ID" value="6187"/>
</dbReference>
<dbReference type="EvolutionaryTrace" id="Q02189"/>
<dbReference type="GO" id="GO:0050617">
    <property type="term" value="F:15,16-dihydrobiliverdin:ferredoxin oxidoreductase activity"/>
    <property type="evidence" value="ECO:0007669"/>
    <property type="project" value="UniProtKB-UniRule"/>
</dbReference>
<dbReference type="GO" id="GO:0050897">
    <property type="term" value="F:cobalt ion binding"/>
    <property type="evidence" value="ECO:0007669"/>
    <property type="project" value="InterPro"/>
</dbReference>
<dbReference type="GO" id="GO:0010024">
    <property type="term" value="P:phytochromobilin biosynthetic process"/>
    <property type="evidence" value="ECO:0007669"/>
    <property type="project" value="InterPro"/>
</dbReference>
<dbReference type="Gene3D" id="3.40.1500.20">
    <property type="match status" value="1"/>
</dbReference>
<dbReference type="HAMAP" id="MF_00792">
    <property type="entry name" value="PebA"/>
    <property type="match status" value="1"/>
</dbReference>
<dbReference type="InterPro" id="IPR023658">
    <property type="entry name" value="DiHydbiliverdin_OxRdtase"/>
</dbReference>
<dbReference type="InterPro" id="IPR009249">
    <property type="entry name" value="Ferredoxin-dep_bilin_Rdtase"/>
</dbReference>
<dbReference type="NCBIfam" id="NF009720">
    <property type="entry name" value="PRK13247.1"/>
    <property type="match status" value="1"/>
</dbReference>
<dbReference type="PANTHER" id="PTHR34557">
    <property type="entry name" value="PHYTOCHROMOBILIN:FERREDOXIN OXIDOREDUCTASE, CHLOROPLASTIC"/>
    <property type="match status" value="1"/>
</dbReference>
<dbReference type="PANTHER" id="PTHR34557:SF1">
    <property type="entry name" value="PHYTOCHROMOBILIN:FERREDOXIN OXIDOREDUCTASE, CHLOROPLASTIC"/>
    <property type="match status" value="1"/>
</dbReference>
<dbReference type="Pfam" id="PF05996">
    <property type="entry name" value="Fe_bilin_red"/>
    <property type="match status" value="1"/>
</dbReference>
<comment type="function">
    <text>Catalyzes the two-electron reduction of biliverdin IX-alpha at the C15 methine bridge.</text>
</comment>
<comment type="catalytic activity">
    <reaction>
        <text>15,16-dihydrobiliverdin + oxidized 2[4Fe-4S]-[ferredoxin] = biliverdin IXalpha + reduced 2[4Fe-4S]-[ferredoxin] + 2 H(+)</text>
        <dbReference type="Rhea" id="RHEA:10168"/>
        <dbReference type="Rhea" id="RHEA-COMP:10002"/>
        <dbReference type="Rhea" id="RHEA-COMP:10004"/>
        <dbReference type="ChEBI" id="CHEBI:15378"/>
        <dbReference type="ChEBI" id="CHEBI:33722"/>
        <dbReference type="ChEBI" id="CHEBI:33723"/>
        <dbReference type="ChEBI" id="CHEBI:57899"/>
        <dbReference type="ChEBI" id="CHEBI:57991"/>
        <dbReference type="EC" id="1.3.7.2"/>
    </reaction>
</comment>
<comment type="similarity">
    <text evidence="1">Belongs to the HY2 family.</text>
</comment>
<keyword id="KW-0002">3D-structure</keyword>
<keyword id="KW-0560">Oxidoreductase</keyword>